<protein>
    <recommendedName>
        <fullName evidence="1">Threonine--tRNA ligase</fullName>
        <ecNumber evidence="1">6.1.1.3</ecNumber>
    </recommendedName>
    <alternativeName>
        <fullName evidence="1">Threonyl-tRNA synthetase</fullName>
        <shortName evidence="1">ThrRS</shortName>
    </alternativeName>
</protein>
<evidence type="ECO:0000255" key="1">
    <source>
        <dbReference type="HAMAP-Rule" id="MF_00184"/>
    </source>
</evidence>
<evidence type="ECO:0000255" key="2">
    <source>
        <dbReference type="PROSITE-ProRule" id="PRU01228"/>
    </source>
</evidence>
<sequence>MHVTLPDGKQLDLQPGATALDAAKAIGPRLAQDALGATANGELTDLMTPLSDGASITLITKKNPGDAAPLFRHSLGHVMSQAVGEYYKAKGYGPDAIKRGVGPYIENGWYQDFDLPEPLKEEDLPEIEKIMRDIIGRGLDITRREISKDEALAQFPHDPYKAELIEGLPDDEPITFYSQGDYTDLCRGPHFPSTGKLPQSFKLMSTSGAYWRGNEKNPILQRIYGVAFATQKELDEYLFQLEEAKRRDHRKLGKELELFTIDPLVGKGLPLWLPNGTVLREELTNFMKEQQFQRGYQGVVTPNIGNLDLYRTSGHYPYYSESQFNPIQVDEEEYMLKPMNCPHHVRIYASKPRSYRDLPVRLAEFGTVYRYEQSGELNGLTRVRGFTQDDAHIFCRPDQLKREFLDVLDLTVLVLKTFGMTDVRFRVGVRDPESDKYVGDEQNWALAERQIIEAVEEVGLPYTIEPGDAAFYGPKLDFVVKDVLGREWQLGTIQVDYNLPERFDISYTGEDGQEHRPIMIHRAPFGSIERFTGILIEHYAGDFPLWLAPRQVMIIPIADRHNAYAEELREELHRAGLRAEVDDSSNRMQAKVRDAELHKIPVMLIVGDKEQEAREVSVRERTGEGTKERKGVKFDELKAELLERRKNRS</sequence>
<feature type="chain" id="PRO_0000100972" description="Threonine--tRNA ligase">
    <location>
        <begin position="1"/>
        <end position="649"/>
    </location>
</feature>
<feature type="domain" description="TGS" evidence="2">
    <location>
        <begin position="1"/>
        <end position="60"/>
    </location>
</feature>
<feature type="region of interest" description="Catalytic" evidence="1">
    <location>
        <begin position="248"/>
        <end position="544"/>
    </location>
</feature>
<feature type="binding site" evidence="1">
    <location>
        <position position="341"/>
    </location>
    <ligand>
        <name>Zn(2+)</name>
        <dbReference type="ChEBI" id="CHEBI:29105"/>
    </ligand>
</feature>
<feature type="binding site" evidence="1">
    <location>
        <position position="392"/>
    </location>
    <ligand>
        <name>Zn(2+)</name>
        <dbReference type="ChEBI" id="CHEBI:29105"/>
    </ligand>
</feature>
<feature type="binding site" evidence="1">
    <location>
        <position position="521"/>
    </location>
    <ligand>
        <name>Zn(2+)</name>
        <dbReference type="ChEBI" id="CHEBI:29105"/>
    </ligand>
</feature>
<name>SYT_DEIRA</name>
<gene>
    <name evidence="1" type="primary">thrS</name>
    <name type="ordered locus">DR_2081</name>
</gene>
<proteinExistence type="inferred from homology"/>
<reference key="1">
    <citation type="journal article" date="1999" name="Science">
        <title>Genome sequence of the radioresistant bacterium Deinococcus radiodurans R1.</title>
        <authorList>
            <person name="White O."/>
            <person name="Eisen J.A."/>
            <person name="Heidelberg J.F."/>
            <person name="Hickey E.K."/>
            <person name="Peterson J.D."/>
            <person name="Dodson R.J."/>
            <person name="Haft D.H."/>
            <person name="Gwinn M.L."/>
            <person name="Nelson W.C."/>
            <person name="Richardson D.L."/>
            <person name="Moffat K.S."/>
            <person name="Qin H."/>
            <person name="Jiang L."/>
            <person name="Pamphile W."/>
            <person name="Crosby M."/>
            <person name="Shen M."/>
            <person name="Vamathevan J.J."/>
            <person name="Lam P."/>
            <person name="McDonald L.A."/>
            <person name="Utterback T.R."/>
            <person name="Zalewski C."/>
            <person name="Makarova K.S."/>
            <person name="Aravind L."/>
            <person name="Daly M.J."/>
            <person name="Minton K.W."/>
            <person name="Fleischmann R.D."/>
            <person name="Ketchum K.A."/>
            <person name="Nelson K.E."/>
            <person name="Salzberg S.L."/>
            <person name="Smith H.O."/>
            <person name="Venter J.C."/>
            <person name="Fraser C.M."/>
        </authorList>
    </citation>
    <scope>NUCLEOTIDE SEQUENCE [LARGE SCALE GENOMIC DNA]</scope>
    <source>
        <strain>ATCC 13939 / DSM 20539 / JCM 16871 / CCUG 27074 / LMG 4051 / NBRC 15346 / NCIMB 9279 / VKM B-1422 / R1</strain>
    </source>
</reference>
<keyword id="KW-0030">Aminoacyl-tRNA synthetase</keyword>
<keyword id="KW-0067">ATP-binding</keyword>
<keyword id="KW-0963">Cytoplasm</keyword>
<keyword id="KW-0436">Ligase</keyword>
<keyword id="KW-0479">Metal-binding</keyword>
<keyword id="KW-0547">Nucleotide-binding</keyword>
<keyword id="KW-0648">Protein biosynthesis</keyword>
<keyword id="KW-1185">Reference proteome</keyword>
<keyword id="KW-0694">RNA-binding</keyword>
<keyword id="KW-0820">tRNA-binding</keyword>
<keyword id="KW-0862">Zinc</keyword>
<comment type="function">
    <text evidence="1">Catalyzes the attachment of threonine to tRNA(Thr) in a two-step reaction: L-threonine is first activated by ATP to form Thr-AMP and then transferred to the acceptor end of tRNA(Thr). Also edits incorrectly charged L-seryl-tRNA(Thr).</text>
</comment>
<comment type="catalytic activity">
    <reaction evidence="1">
        <text>tRNA(Thr) + L-threonine + ATP = L-threonyl-tRNA(Thr) + AMP + diphosphate + H(+)</text>
        <dbReference type="Rhea" id="RHEA:24624"/>
        <dbReference type="Rhea" id="RHEA-COMP:9670"/>
        <dbReference type="Rhea" id="RHEA-COMP:9704"/>
        <dbReference type="ChEBI" id="CHEBI:15378"/>
        <dbReference type="ChEBI" id="CHEBI:30616"/>
        <dbReference type="ChEBI" id="CHEBI:33019"/>
        <dbReference type="ChEBI" id="CHEBI:57926"/>
        <dbReference type="ChEBI" id="CHEBI:78442"/>
        <dbReference type="ChEBI" id="CHEBI:78534"/>
        <dbReference type="ChEBI" id="CHEBI:456215"/>
        <dbReference type="EC" id="6.1.1.3"/>
    </reaction>
</comment>
<comment type="cofactor">
    <cofactor evidence="1">
        <name>Zn(2+)</name>
        <dbReference type="ChEBI" id="CHEBI:29105"/>
    </cofactor>
    <text evidence="1">Binds 1 zinc ion per subunit.</text>
</comment>
<comment type="subunit">
    <text evidence="1">Homodimer.</text>
</comment>
<comment type="subcellular location">
    <subcellularLocation>
        <location evidence="1">Cytoplasm</location>
    </subcellularLocation>
</comment>
<comment type="similarity">
    <text evidence="1">Belongs to the class-II aminoacyl-tRNA synthetase family.</text>
</comment>
<accession>Q9RSP3</accession>
<dbReference type="EC" id="6.1.1.3" evidence="1"/>
<dbReference type="EMBL" id="AE000513">
    <property type="protein sequence ID" value="AAF11630.1"/>
    <property type="molecule type" value="Genomic_DNA"/>
</dbReference>
<dbReference type="PIR" id="B75317">
    <property type="entry name" value="B75317"/>
</dbReference>
<dbReference type="RefSeq" id="NP_295804.1">
    <property type="nucleotide sequence ID" value="NC_001263.1"/>
</dbReference>
<dbReference type="RefSeq" id="WP_010888712.1">
    <property type="nucleotide sequence ID" value="NC_001263.1"/>
</dbReference>
<dbReference type="SMR" id="Q9RSP3"/>
<dbReference type="FunCoup" id="Q9RSP3">
    <property type="interactions" value="489"/>
</dbReference>
<dbReference type="STRING" id="243230.DR_2081"/>
<dbReference type="PaxDb" id="243230-DR_2081"/>
<dbReference type="EnsemblBacteria" id="AAF11630">
    <property type="protein sequence ID" value="AAF11630"/>
    <property type="gene ID" value="DR_2081"/>
</dbReference>
<dbReference type="GeneID" id="69518323"/>
<dbReference type="KEGG" id="dra:DR_2081"/>
<dbReference type="PATRIC" id="fig|243230.17.peg.2305"/>
<dbReference type="eggNOG" id="COG0441">
    <property type="taxonomic scope" value="Bacteria"/>
</dbReference>
<dbReference type="HOGENOM" id="CLU_008554_0_1_0"/>
<dbReference type="InParanoid" id="Q9RSP3"/>
<dbReference type="OrthoDB" id="9802304at2"/>
<dbReference type="Proteomes" id="UP000002524">
    <property type="component" value="Chromosome 1"/>
</dbReference>
<dbReference type="GO" id="GO:0005737">
    <property type="term" value="C:cytoplasm"/>
    <property type="evidence" value="ECO:0007669"/>
    <property type="project" value="UniProtKB-SubCell"/>
</dbReference>
<dbReference type="GO" id="GO:0005524">
    <property type="term" value="F:ATP binding"/>
    <property type="evidence" value="ECO:0007669"/>
    <property type="project" value="UniProtKB-UniRule"/>
</dbReference>
<dbReference type="GO" id="GO:0046872">
    <property type="term" value="F:metal ion binding"/>
    <property type="evidence" value="ECO:0007669"/>
    <property type="project" value="UniProtKB-KW"/>
</dbReference>
<dbReference type="GO" id="GO:0004829">
    <property type="term" value="F:threonine-tRNA ligase activity"/>
    <property type="evidence" value="ECO:0000318"/>
    <property type="project" value="GO_Central"/>
</dbReference>
<dbReference type="GO" id="GO:0000049">
    <property type="term" value="F:tRNA binding"/>
    <property type="evidence" value="ECO:0007669"/>
    <property type="project" value="UniProtKB-KW"/>
</dbReference>
<dbReference type="GO" id="GO:0006435">
    <property type="term" value="P:threonyl-tRNA aminoacylation"/>
    <property type="evidence" value="ECO:0000318"/>
    <property type="project" value="GO_Central"/>
</dbReference>
<dbReference type="CDD" id="cd01667">
    <property type="entry name" value="TGS_ThrRS"/>
    <property type="match status" value="1"/>
</dbReference>
<dbReference type="CDD" id="cd00860">
    <property type="entry name" value="ThrRS_anticodon"/>
    <property type="match status" value="1"/>
</dbReference>
<dbReference type="CDD" id="cd00771">
    <property type="entry name" value="ThrRS_core"/>
    <property type="match status" value="1"/>
</dbReference>
<dbReference type="FunFam" id="3.30.54.20:FF:000002">
    <property type="entry name" value="Threonine--tRNA ligase"/>
    <property type="match status" value="1"/>
</dbReference>
<dbReference type="FunFam" id="3.30.930.10:FF:000002">
    <property type="entry name" value="Threonine--tRNA ligase"/>
    <property type="match status" value="1"/>
</dbReference>
<dbReference type="FunFam" id="3.40.50.800:FF:000001">
    <property type="entry name" value="Threonine--tRNA ligase"/>
    <property type="match status" value="1"/>
</dbReference>
<dbReference type="FunFam" id="3.30.980.10:FF:000005">
    <property type="entry name" value="Threonyl-tRNA synthetase, mitochondrial"/>
    <property type="match status" value="1"/>
</dbReference>
<dbReference type="Gene3D" id="3.10.20.30">
    <property type="match status" value="1"/>
</dbReference>
<dbReference type="Gene3D" id="3.30.54.20">
    <property type="match status" value="1"/>
</dbReference>
<dbReference type="Gene3D" id="3.40.50.800">
    <property type="entry name" value="Anticodon-binding domain"/>
    <property type="match status" value="1"/>
</dbReference>
<dbReference type="Gene3D" id="3.30.930.10">
    <property type="entry name" value="Bira Bifunctional Protein, Domain 2"/>
    <property type="match status" value="1"/>
</dbReference>
<dbReference type="Gene3D" id="3.30.980.10">
    <property type="entry name" value="Threonyl-trna Synthetase, Chain A, domain 2"/>
    <property type="match status" value="1"/>
</dbReference>
<dbReference type="HAMAP" id="MF_00184">
    <property type="entry name" value="Thr_tRNA_synth"/>
    <property type="match status" value="1"/>
</dbReference>
<dbReference type="InterPro" id="IPR002314">
    <property type="entry name" value="aa-tRNA-synt_IIb"/>
</dbReference>
<dbReference type="InterPro" id="IPR006195">
    <property type="entry name" value="aa-tRNA-synth_II"/>
</dbReference>
<dbReference type="InterPro" id="IPR045864">
    <property type="entry name" value="aa-tRNA-synth_II/BPL/LPL"/>
</dbReference>
<dbReference type="InterPro" id="IPR004154">
    <property type="entry name" value="Anticodon-bd"/>
</dbReference>
<dbReference type="InterPro" id="IPR036621">
    <property type="entry name" value="Anticodon-bd_dom_sf"/>
</dbReference>
<dbReference type="InterPro" id="IPR012675">
    <property type="entry name" value="Beta-grasp_dom_sf"/>
</dbReference>
<dbReference type="InterPro" id="IPR004095">
    <property type="entry name" value="TGS"/>
</dbReference>
<dbReference type="InterPro" id="IPR012676">
    <property type="entry name" value="TGS-like"/>
</dbReference>
<dbReference type="InterPro" id="IPR002320">
    <property type="entry name" value="Thr-tRNA-ligase_IIa"/>
</dbReference>
<dbReference type="InterPro" id="IPR018163">
    <property type="entry name" value="Thr/Ala-tRNA-synth_IIc_edit"/>
</dbReference>
<dbReference type="InterPro" id="IPR047246">
    <property type="entry name" value="ThrRS_anticodon"/>
</dbReference>
<dbReference type="InterPro" id="IPR033728">
    <property type="entry name" value="ThrRS_core"/>
</dbReference>
<dbReference type="InterPro" id="IPR012947">
    <property type="entry name" value="tRNA_SAD"/>
</dbReference>
<dbReference type="NCBIfam" id="TIGR00418">
    <property type="entry name" value="thrS"/>
    <property type="match status" value="1"/>
</dbReference>
<dbReference type="PANTHER" id="PTHR11451:SF44">
    <property type="entry name" value="THREONINE--TRNA LIGASE, CHLOROPLASTIC_MITOCHONDRIAL 2"/>
    <property type="match status" value="1"/>
</dbReference>
<dbReference type="PANTHER" id="PTHR11451">
    <property type="entry name" value="THREONINE-TRNA LIGASE"/>
    <property type="match status" value="1"/>
</dbReference>
<dbReference type="Pfam" id="PF03129">
    <property type="entry name" value="HGTP_anticodon"/>
    <property type="match status" value="1"/>
</dbReference>
<dbReference type="Pfam" id="PF02824">
    <property type="entry name" value="TGS"/>
    <property type="match status" value="1"/>
</dbReference>
<dbReference type="Pfam" id="PF00587">
    <property type="entry name" value="tRNA-synt_2b"/>
    <property type="match status" value="1"/>
</dbReference>
<dbReference type="Pfam" id="PF07973">
    <property type="entry name" value="tRNA_SAD"/>
    <property type="match status" value="1"/>
</dbReference>
<dbReference type="PRINTS" id="PR01047">
    <property type="entry name" value="TRNASYNTHTHR"/>
</dbReference>
<dbReference type="SMART" id="SM00863">
    <property type="entry name" value="tRNA_SAD"/>
    <property type="match status" value="1"/>
</dbReference>
<dbReference type="SUPFAM" id="SSF52954">
    <property type="entry name" value="Class II aaRS ABD-related"/>
    <property type="match status" value="1"/>
</dbReference>
<dbReference type="SUPFAM" id="SSF55681">
    <property type="entry name" value="Class II aaRS and biotin synthetases"/>
    <property type="match status" value="1"/>
</dbReference>
<dbReference type="SUPFAM" id="SSF81271">
    <property type="entry name" value="TGS-like"/>
    <property type="match status" value="1"/>
</dbReference>
<dbReference type="SUPFAM" id="SSF55186">
    <property type="entry name" value="ThrRS/AlaRS common domain"/>
    <property type="match status" value="1"/>
</dbReference>
<dbReference type="PROSITE" id="PS50862">
    <property type="entry name" value="AA_TRNA_LIGASE_II"/>
    <property type="match status" value="1"/>
</dbReference>
<dbReference type="PROSITE" id="PS51880">
    <property type="entry name" value="TGS"/>
    <property type="match status" value="1"/>
</dbReference>
<organism>
    <name type="scientific">Deinococcus radiodurans (strain ATCC 13939 / DSM 20539 / JCM 16871 / CCUG 27074 / LMG 4051 / NBRC 15346 / NCIMB 9279 / VKM B-1422 / R1)</name>
    <dbReference type="NCBI Taxonomy" id="243230"/>
    <lineage>
        <taxon>Bacteria</taxon>
        <taxon>Thermotogati</taxon>
        <taxon>Deinococcota</taxon>
        <taxon>Deinococci</taxon>
        <taxon>Deinococcales</taxon>
        <taxon>Deinococcaceae</taxon>
        <taxon>Deinococcus</taxon>
    </lineage>
</organism>